<proteinExistence type="inferred from homology"/>
<keyword id="KW-0328">Glycosyltransferase</keyword>
<keyword id="KW-0460">Magnesium</keyword>
<keyword id="KW-0479">Metal-binding</keyword>
<keyword id="KW-1185">Reference proteome</keyword>
<keyword id="KW-0808">Transferase</keyword>
<organism>
    <name type="scientific">Mycolicibacterium paratuberculosis (strain ATCC BAA-968 / K-10)</name>
    <name type="common">Mycobacterium paratuberculosis</name>
    <dbReference type="NCBI Taxonomy" id="262316"/>
    <lineage>
        <taxon>Bacteria</taxon>
        <taxon>Bacillati</taxon>
        <taxon>Actinomycetota</taxon>
        <taxon>Actinomycetes</taxon>
        <taxon>Mycobacteriales</taxon>
        <taxon>Mycobacteriaceae</taxon>
        <taxon>Mycobacterium</taxon>
        <taxon>Mycobacterium avium complex (MAC)</taxon>
    </lineage>
</organism>
<dbReference type="EC" id="2.4.1.250" evidence="1"/>
<dbReference type="EMBL" id="AE016958">
    <property type="protein sequence ID" value="AAS06529.1"/>
    <property type="molecule type" value="Genomic_DNA"/>
</dbReference>
<dbReference type="SMR" id="Q73SU4"/>
<dbReference type="STRING" id="262316.MAP_3979"/>
<dbReference type="CAZy" id="GT4">
    <property type="family name" value="Glycosyltransferase Family 4"/>
</dbReference>
<dbReference type="KEGG" id="mpa:MAP_3979"/>
<dbReference type="eggNOG" id="COG0438">
    <property type="taxonomic scope" value="Bacteria"/>
</dbReference>
<dbReference type="HOGENOM" id="CLU_009583_2_3_11"/>
<dbReference type="Proteomes" id="UP000000580">
    <property type="component" value="Chromosome"/>
</dbReference>
<dbReference type="GO" id="GO:0008375">
    <property type="term" value="F:acetylglucosaminyltransferase activity"/>
    <property type="evidence" value="ECO:0007669"/>
    <property type="project" value="UniProtKB-UniRule"/>
</dbReference>
<dbReference type="GO" id="GO:0102710">
    <property type="term" value="F:D-inositol-3-phosphate glycosyltransferase activity"/>
    <property type="evidence" value="ECO:0007669"/>
    <property type="project" value="UniProtKB-EC"/>
</dbReference>
<dbReference type="GO" id="GO:0000287">
    <property type="term" value="F:magnesium ion binding"/>
    <property type="evidence" value="ECO:0007669"/>
    <property type="project" value="UniProtKB-UniRule"/>
</dbReference>
<dbReference type="GO" id="GO:0010125">
    <property type="term" value="P:mycothiol biosynthetic process"/>
    <property type="evidence" value="ECO:0007669"/>
    <property type="project" value="UniProtKB-UniRule"/>
</dbReference>
<dbReference type="CDD" id="cd03800">
    <property type="entry name" value="GT4_sucrose_synthase"/>
    <property type="match status" value="1"/>
</dbReference>
<dbReference type="FunFam" id="3.40.50.2000:FF:000123">
    <property type="entry name" value="D-inositol-3-phosphate glycosyltransferase"/>
    <property type="match status" value="1"/>
</dbReference>
<dbReference type="Gene3D" id="3.40.50.2000">
    <property type="entry name" value="Glycogen Phosphorylase B"/>
    <property type="match status" value="2"/>
</dbReference>
<dbReference type="HAMAP" id="MF_01695">
    <property type="entry name" value="MshA"/>
    <property type="match status" value="1"/>
</dbReference>
<dbReference type="InterPro" id="IPR001296">
    <property type="entry name" value="Glyco_trans_1"/>
</dbReference>
<dbReference type="InterPro" id="IPR028098">
    <property type="entry name" value="Glyco_trans_4-like_N"/>
</dbReference>
<dbReference type="InterPro" id="IPR017814">
    <property type="entry name" value="Mycothiol_biosynthesis_MshA"/>
</dbReference>
<dbReference type="NCBIfam" id="TIGR03449">
    <property type="entry name" value="mycothiol_MshA"/>
    <property type="match status" value="1"/>
</dbReference>
<dbReference type="PANTHER" id="PTHR12526:SF510">
    <property type="entry name" value="D-INOSITOL 3-PHOSPHATE GLYCOSYLTRANSFERASE"/>
    <property type="match status" value="1"/>
</dbReference>
<dbReference type="PANTHER" id="PTHR12526">
    <property type="entry name" value="GLYCOSYLTRANSFERASE"/>
    <property type="match status" value="1"/>
</dbReference>
<dbReference type="Pfam" id="PF13579">
    <property type="entry name" value="Glyco_trans_4_4"/>
    <property type="match status" value="1"/>
</dbReference>
<dbReference type="Pfam" id="PF00534">
    <property type="entry name" value="Glycos_transf_1"/>
    <property type="match status" value="1"/>
</dbReference>
<dbReference type="SUPFAM" id="SSF53756">
    <property type="entry name" value="UDP-Glycosyltransferase/glycogen phosphorylase"/>
    <property type="match status" value="1"/>
</dbReference>
<sequence>MCCALGPGGEPSCKDDRVRHDDVFRLNEPRRVAVLAVHTSPLAQPGTGDAGGMNVYVLQTALHLARRGIEVEIFTRATASADPPVQRVAPGVLVRNVVAGPFEGLDKYDLPTQLCAFAAGVLRAEASHEPGYYDIVHSHYWLSGQVGWLARDRWAVPLVHTAHTLAAVKNAALAQGDSPEPPLRTVGEQQVVDEADRLIVNTDDEARQLISIHHADPARIDVVHPGVDLDVFRPGDRRAARAALGLPLDKDIVAFVGRIQPLKAPDIVLRAAAKLPGVRIVVAGGPSGTGLASPDGLARLADELGISARVTFLPPQSRPNLATLFQAANLVAVPSYSESFGLVALEAQACGTPVAAAAVGGLPVAVRDGVTGTLVAGHDVDHWADALAGLLRAPAPAAAAMSRAAAAHAATFSWDHTTDALLASYRRAIREYTTERRGVGA</sequence>
<feature type="chain" id="PRO_0000400137" description="D-inositol 3-phosphate glycosyltransferase">
    <location>
        <begin position="1"/>
        <end position="441"/>
    </location>
</feature>
<feature type="binding site" evidence="1">
    <location>
        <position position="38"/>
    </location>
    <ligand>
        <name>1D-myo-inositol 3-phosphate</name>
        <dbReference type="ChEBI" id="CHEBI:58401"/>
    </ligand>
</feature>
<feature type="binding site" evidence="1">
    <location>
        <begin position="44"/>
        <end position="45"/>
    </location>
    <ligand>
        <name>UDP-N-acetyl-alpha-D-glucosamine</name>
        <dbReference type="ChEBI" id="CHEBI:57705"/>
    </ligand>
</feature>
<feature type="binding site" evidence="1">
    <location>
        <begin position="49"/>
        <end position="54"/>
    </location>
    <ligand>
        <name>1D-myo-inositol 3-phosphate</name>
        <dbReference type="ChEBI" id="CHEBI:58401"/>
    </ligand>
</feature>
<feature type="binding site" evidence="1">
    <location>
        <position position="52"/>
    </location>
    <ligand>
        <name>UDP-N-acetyl-alpha-D-glucosamine</name>
        <dbReference type="ChEBI" id="CHEBI:57705"/>
    </ligand>
</feature>
<feature type="binding site" evidence="1">
    <location>
        <position position="107"/>
    </location>
    <ligand>
        <name>1D-myo-inositol 3-phosphate</name>
        <dbReference type="ChEBI" id="CHEBI:58401"/>
    </ligand>
</feature>
<feature type="binding site" evidence="1">
    <location>
        <position position="140"/>
    </location>
    <ligand>
        <name>1D-myo-inositol 3-phosphate</name>
        <dbReference type="ChEBI" id="CHEBI:58401"/>
    </ligand>
</feature>
<feature type="binding site" evidence="1">
    <location>
        <position position="164"/>
    </location>
    <ligand>
        <name>1D-myo-inositol 3-phosphate</name>
        <dbReference type="ChEBI" id="CHEBI:58401"/>
    </ligand>
</feature>
<feature type="binding site" evidence="1">
    <location>
        <position position="184"/>
    </location>
    <ligand>
        <name>1D-myo-inositol 3-phosphate</name>
        <dbReference type="ChEBI" id="CHEBI:58401"/>
    </ligand>
</feature>
<feature type="binding site" evidence="1">
    <location>
        <position position="258"/>
    </location>
    <ligand>
        <name>UDP-N-acetyl-alpha-D-glucosamine</name>
        <dbReference type="ChEBI" id="CHEBI:57705"/>
    </ligand>
</feature>
<feature type="binding site" evidence="1">
    <location>
        <position position="263"/>
    </location>
    <ligand>
        <name>UDP-N-acetyl-alpha-D-glucosamine</name>
        <dbReference type="ChEBI" id="CHEBI:57705"/>
    </ligand>
</feature>
<feature type="binding site" evidence="1">
    <location>
        <position position="316"/>
    </location>
    <ligand>
        <name>UDP-N-acetyl-alpha-D-glucosamine</name>
        <dbReference type="ChEBI" id="CHEBI:57705"/>
    </ligand>
</feature>
<feature type="binding site" evidence="1">
    <location>
        <position position="325"/>
    </location>
    <ligand>
        <name>Mg(2+)</name>
        <dbReference type="ChEBI" id="CHEBI:18420"/>
    </ligand>
</feature>
<feature type="binding site" evidence="1">
    <location>
        <position position="326"/>
    </location>
    <ligand>
        <name>Mg(2+)</name>
        <dbReference type="ChEBI" id="CHEBI:18420"/>
    </ligand>
</feature>
<feature type="binding site" evidence="1">
    <location>
        <position position="328"/>
    </location>
    <ligand>
        <name>Mg(2+)</name>
        <dbReference type="ChEBI" id="CHEBI:18420"/>
    </ligand>
</feature>
<feature type="binding site" evidence="1">
    <location>
        <position position="338"/>
    </location>
    <ligand>
        <name>UDP-N-acetyl-alpha-D-glucosamine</name>
        <dbReference type="ChEBI" id="CHEBI:57705"/>
    </ligand>
</feature>
<feature type="binding site" evidence="1">
    <location>
        <position position="346"/>
    </location>
    <ligand>
        <name>UDP-N-acetyl-alpha-D-glucosamine</name>
        <dbReference type="ChEBI" id="CHEBI:57705"/>
    </ligand>
</feature>
<feature type="binding site" evidence="1">
    <location>
        <position position="352"/>
    </location>
    <ligand>
        <name>Mg(2+)</name>
        <dbReference type="ChEBI" id="CHEBI:18420"/>
    </ligand>
</feature>
<comment type="function">
    <text evidence="1">Catalyzes the transfer of a N-acetyl-glucosamine moiety to 1D-myo-inositol 3-phosphate to produce 1D-myo-inositol 2-acetamido-2-deoxy-glucopyranoside 3-phosphate in the mycothiol biosynthesis pathway.</text>
</comment>
<comment type="catalytic activity">
    <reaction evidence="1">
        <text>1D-myo-inositol 3-phosphate + UDP-N-acetyl-alpha-D-glucosamine = 1D-myo-inositol 2-acetamido-2-deoxy-alpha-D-glucopyranoside 3-phosphate + UDP + H(+)</text>
        <dbReference type="Rhea" id="RHEA:26188"/>
        <dbReference type="ChEBI" id="CHEBI:15378"/>
        <dbReference type="ChEBI" id="CHEBI:57705"/>
        <dbReference type="ChEBI" id="CHEBI:58223"/>
        <dbReference type="ChEBI" id="CHEBI:58401"/>
        <dbReference type="ChEBI" id="CHEBI:58892"/>
        <dbReference type="EC" id="2.4.1.250"/>
    </reaction>
</comment>
<comment type="subunit">
    <text evidence="1">Homodimer.</text>
</comment>
<comment type="similarity">
    <text evidence="1">Belongs to the glycosyltransferase group 1 family. MshA subfamily.</text>
</comment>
<reference key="1">
    <citation type="journal article" date="2005" name="Proc. Natl. Acad. Sci. U.S.A.">
        <title>The complete genome sequence of Mycobacterium avium subspecies paratuberculosis.</title>
        <authorList>
            <person name="Li L."/>
            <person name="Bannantine J.P."/>
            <person name="Zhang Q."/>
            <person name="Amonsin A."/>
            <person name="May B.J."/>
            <person name="Alt D."/>
            <person name="Banerji N."/>
            <person name="Kanjilal S."/>
            <person name="Kapur V."/>
        </authorList>
    </citation>
    <scope>NUCLEOTIDE SEQUENCE [LARGE SCALE GENOMIC DNA]</scope>
    <source>
        <strain>ATCC BAA-968 / K-10</strain>
    </source>
</reference>
<name>MSHA_MYCPA</name>
<accession>Q73SU4</accession>
<protein>
    <recommendedName>
        <fullName>D-inositol 3-phosphate glycosyltransferase</fullName>
        <ecNumber evidence="1">2.4.1.250</ecNumber>
    </recommendedName>
    <alternativeName>
        <fullName evidence="1">N-acetylglucosamine-inositol-phosphate N-acetylglucosaminyltransferase</fullName>
        <shortName evidence="1">GlcNAc-Ins-P N-acetylglucosaminyltransferase</shortName>
    </alternativeName>
</protein>
<evidence type="ECO:0000255" key="1">
    <source>
        <dbReference type="HAMAP-Rule" id="MF_01695"/>
    </source>
</evidence>
<gene>
    <name evidence="1" type="primary">mshA</name>
    <name type="ordered locus">MAP_3979</name>
</gene>